<comment type="subunit">
    <text evidence="1">Part of the 50S ribosomal subunit. Contacts protein L32.</text>
</comment>
<comment type="similarity">
    <text evidence="1">Belongs to the bacterial ribosomal protein bL17 family.</text>
</comment>
<sequence length="116" mass="13300">MRHSCRVPKLGKPTDQRRALLRSLATQLIRHGQIKTTKPRAKAVQSEVERMITLAKDGSLAARRRALGYLYDKKLVHSLFNEAQERYGSRNGGYTRVLRTIRRRGDNAEMAIIELI</sequence>
<evidence type="ECO:0000255" key="1">
    <source>
        <dbReference type="HAMAP-Rule" id="MF_01368"/>
    </source>
</evidence>
<evidence type="ECO:0000305" key="2"/>
<proteinExistence type="inferred from homology"/>
<keyword id="KW-0687">Ribonucleoprotein</keyword>
<keyword id="KW-0689">Ribosomal protein</keyword>
<gene>
    <name evidence="1" type="primary">rplQ</name>
    <name evidence="1" type="synonym">rpl17</name>
    <name type="ordered locus">Tery_2987</name>
</gene>
<name>RL17_TRIEI</name>
<protein>
    <recommendedName>
        <fullName evidence="1">Large ribosomal subunit protein bL17</fullName>
    </recommendedName>
    <alternativeName>
        <fullName evidence="2">50S ribosomal protein L17</fullName>
    </alternativeName>
</protein>
<reference key="1">
    <citation type="journal article" date="2015" name="Proc. Natl. Acad. Sci. U.S.A.">
        <title>Trichodesmium genome maintains abundant, widespread noncoding DNA in situ, despite oligotrophic lifestyle.</title>
        <authorList>
            <person name="Walworth N."/>
            <person name="Pfreundt U."/>
            <person name="Nelson W.C."/>
            <person name="Mincer T."/>
            <person name="Heidelberg J.F."/>
            <person name="Fu F."/>
            <person name="Waterbury J.B."/>
            <person name="Glavina del Rio T."/>
            <person name="Goodwin L."/>
            <person name="Kyrpides N.C."/>
            <person name="Land M.L."/>
            <person name="Woyke T."/>
            <person name="Hutchins D.A."/>
            <person name="Hess W.R."/>
            <person name="Webb E.A."/>
        </authorList>
    </citation>
    <scope>NUCLEOTIDE SEQUENCE [LARGE SCALE GENOMIC DNA]</scope>
    <source>
        <strain>IMS101</strain>
    </source>
</reference>
<accession>Q110D2</accession>
<organism>
    <name type="scientific">Trichodesmium erythraeum (strain IMS101)</name>
    <dbReference type="NCBI Taxonomy" id="203124"/>
    <lineage>
        <taxon>Bacteria</taxon>
        <taxon>Bacillati</taxon>
        <taxon>Cyanobacteriota</taxon>
        <taxon>Cyanophyceae</taxon>
        <taxon>Oscillatoriophycideae</taxon>
        <taxon>Oscillatoriales</taxon>
        <taxon>Microcoleaceae</taxon>
        <taxon>Trichodesmium</taxon>
    </lineage>
</organism>
<feature type="chain" id="PRO_0000267962" description="Large ribosomal subunit protein bL17">
    <location>
        <begin position="1"/>
        <end position="116"/>
    </location>
</feature>
<dbReference type="EMBL" id="CP000393">
    <property type="protein sequence ID" value="ABG52142.1"/>
    <property type="molecule type" value="Genomic_DNA"/>
</dbReference>
<dbReference type="RefSeq" id="WP_011612498.1">
    <property type="nucleotide sequence ID" value="NC_008312.1"/>
</dbReference>
<dbReference type="SMR" id="Q110D2"/>
<dbReference type="STRING" id="203124.Tery_2987"/>
<dbReference type="KEGG" id="ter:Tery_2987"/>
<dbReference type="eggNOG" id="COG0203">
    <property type="taxonomic scope" value="Bacteria"/>
</dbReference>
<dbReference type="HOGENOM" id="CLU_074407_2_2_3"/>
<dbReference type="OrthoDB" id="9809073at2"/>
<dbReference type="GO" id="GO:0022625">
    <property type="term" value="C:cytosolic large ribosomal subunit"/>
    <property type="evidence" value="ECO:0007669"/>
    <property type="project" value="TreeGrafter"/>
</dbReference>
<dbReference type="GO" id="GO:0003735">
    <property type="term" value="F:structural constituent of ribosome"/>
    <property type="evidence" value="ECO:0007669"/>
    <property type="project" value="InterPro"/>
</dbReference>
<dbReference type="GO" id="GO:0006412">
    <property type="term" value="P:translation"/>
    <property type="evidence" value="ECO:0007669"/>
    <property type="project" value="UniProtKB-UniRule"/>
</dbReference>
<dbReference type="FunFam" id="3.90.1030.10:FF:000001">
    <property type="entry name" value="50S ribosomal protein L17"/>
    <property type="match status" value="1"/>
</dbReference>
<dbReference type="Gene3D" id="3.90.1030.10">
    <property type="entry name" value="Ribosomal protein L17"/>
    <property type="match status" value="1"/>
</dbReference>
<dbReference type="HAMAP" id="MF_01368">
    <property type="entry name" value="Ribosomal_bL17"/>
    <property type="match status" value="1"/>
</dbReference>
<dbReference type="InterPro" id="IPR000456">
    <property type="entry name" value="Ribosomal_bL17"/>
</dbReference>
<dbReference type="InterPro" id="IPR047859">
    <property type="entry name" value="Ribosomal_bL17_CS"/>
</dbReference>
<dbReference type="InterPro" id="IPR036373">
    <property type="entry name" value="Ribosomal_bL17_sf"/>
</dbReference>
<dbReference type="NCBIfam" id="TIGR00059">
    <property type="entry name" value="L17"/>
    <property type="match status" value="1"/>
</dbReference>
<dbReference type="PANTHER" id="PTHR14413:SF16">
    <property type="entry name" value="LARGE RIBOSOMAL SUBUNIT PROTEIN BL17M"/>
    <property type="match status" value="1"/>
</dbReference>
<dbReference type="PANTHER" id="PTHR14413">
    <property type="entry name" value="RIBOSOMAL PROTEIN L17"/>
    <property type="match status" value="1"/>
</dbReference>
<dbReference type="Pfam" id="PF01196">
    <property type="entry name" value="Ribosomal_L17"/>
    <property type="match status" value="1"/>
</dbReference>
<dbReference type="SUPFAM" id="SSF64263">
    <property type="entry name" value="Prokaryotic ribosomal protein L17"/>
    <property type="match status" value="1"/>
</dbReference>
<dbReference type="PROSITE" id="PS01167">
    <property type="entry name" value="RIBOSOMAL_L17"/>
    <property type="match status" value="1"/>
</dbReference>